<reference key="1">
    <citation type="journal article" date="2006" name="Proc. Natl. Acad. Sci. U.S.A.">
        <title>Genome reduction in Leptospira borgpetersenii reflects limited transmission potential.</title>
        <authorList>
            <person name="Bulach D.M."/>
            <person name="Zuerner R.L."/>
            <person name="Wilson P."/>
            <person name="Seemann T."/>
            <person name="McGrath A."/>
            <person name="Cullen P.A."/>
            <person name="Davis J."/>
            <person name="Johnson M."/>
            <person name="Kuczek E."/>
            <person name="Alt D.P."/>
            <person name="Peterson-Burch B."/>
            <person name="Coppel R.L."/>
            <person name="Rood J.I."/>
            <person name="Davies J.K."/>
            <person name="Adler B."/>
        </authorList>
    </citation>
    <scope>NUCLEOTIDE SEQUENCE [LARGE SCALE GENOMIC DNA]</scope>
    <source>
        <strain>JB197</strain>
    </source>
</reference>
<protein>
    <recommendedName>
        <fullName evidence="1">dCTP deaminase, dUMP-forming</fullName>
        <ecNumber evidence="1">3.5.4.30</ecNumber>
    </recommendedName>
    <alternativeName>
        <fullName evidence="1">Bifunctional dCTP deaminase:dUTPase</fullName>
    </alternativeName>
    <alternativeName>
        <fullName evidence="1">DCD-DUT</fullName>
    </alternativeName>
</protein>
<gene>
    <name evidence="1" type="primary">dcd</name>
    <name type="ordered locus">LBJ_0062</name>
</gene>
<evidence type="ECO:0000255" key="1">
    <source>
        <dbReference type="HAMAP-Rule" id="MF_00146"/>
    </source>
</evidence>
<organism>
    <name type="scientific">Leptospira borgpetersenii serovar Hardjo-bovis (strain JB197)</name>
    <dbReference type="NCBI Taxonomy" id="355277"/>
    <lineage>
        <taxon>Bacteria</taxon>
        <taxon>Pseudomonadati</taxon>
        <taxon>Spirochaetota</taxon>
        <taxon>Spirochaetia</taxon>
        <taxon>Leptospirales</taxon>
        <taxon>Leptospiraceae</taxon>
        <taxon>Leptospira</taxon>
    </lineage>
</organism>
<name>DCDB_LEPBJ</name>
<keyword id="KW-0378">Hydrolase</keyword>
<keyword id="KW-0546">Nucleotide metabolism</keyword>
<keyword id="KW-0547">Nucleotide-binding</keyword>
<feature type="chain" id="PRO_1000117977" description="dCTP deaminase, dUMP-forming">
    <location>
        <begin position="1"/>
        <end position="173"/>
    </location>
</feature>
<feature type="active site" description="Proton donor/acceptor" evidence="1">
    <location>
        <position position="121"/>
    </location>
</feature>
<feature type="binding site" evidence="1">
    <location>
        <begin position="93"/>
        <end position="98"/>
    </location>
    <ligand>
        <name>dCTP</name>
        <dbReference type="ChEBI" id="CHEBI:61481"/>
    </ligand>
</feature>
<feature type="binding site" evidence="1">
    <location>
        <position position="111"/>
    </location>
    <ligand>
        <name>dCTP</name>
        <dbReference type="ChEBI" id="CHEBI:61481"/>
    </ligand>
</feature>
<feature type="binding site" evidence="1">
    <location>
        <begin position="119"/>
        <end position="121"/>
    </location>
    <ligand>
        <name>dCTP</name>
        <dbReference type="ChEBI" id="CHEBI:61481"/>
    </ligand>
</feature>
<feature type="binding site" evidence="1">
    <location>
        <position position="138"/>
    </location>
    <ligand>
        <name>dCTP</name>
        <dbReference type="ChEBI" id="CHEBI:61481"/>
    </ligand>
</feature>
<feature type="site" description="Important for bifunctional activity" evidence="1">
    <location>
        <begin position="108"/>
        <end position="109"/>
    </location>
</feature>
<sequence length="173" mass="19695">MILTGKEIQKRIGKDIIITPYSEKQLNPNSYNLRLHEELLIYTELPLDMKKPNLTKKQIIPESGLLLKPGILYLGRTLEFTETHHLVPMLEGRSSIGRLGMLVHVTAGFGDVGFKGFWTLEISVIQPLIVYPGVEVCQIFYHTLEGQITEYTSGKYQANQGIQPSMLYQDFEK</sequence>
<dbReference type="EC" id="3.5.4.30" evidence="1"/>
<dbReference type="EMBL" id="CP000350">
    <property type="protein sequence ID" value="ABJ74814.1"/>
    <property type="molecule type" value="Genomic_DNA"/>
</dbReference>
<dbReference type="RefSeq" id="WP_011671221.1">
    <property type="nucleotide sequence ID" value="NC_008510.1"/>
</dbReference>
<dbReference type="SMR" id="Q04WA6"/>
<dbReference type="KEGG" id="lbj:LBJ_0062"/>
<dbReference type="HOGENOM" id="CLU_087476_0_1_12"/>
<dbReference type="UniPathway" id="UPA00610">
    <property type="reaction ID" value="UER00667"/>
</dbReference>
<dbReference type="Proteomes" id="UP000000656">
    <property type="component" value="Chromosome 1"/>
</dbReference>
<dbReference type="GO" id="GO:0033973">
    <property type="term" value="F:dCTP deaminase (dUMP-forming) activity"/>
    <property type="evidence" value="ECO:0007669"/>
    <property type="project" value="UniProtKB-UniRule"/>
</dbReference>
<dbReference type="GO" id="GO:0008829">
    <property type="term" value="F:dCTP deaminase activity"/>
    <property type="evidence" value="ECO:0007669"/>
    <property type="project" value="InterPro"/>
</dbReference>
<dbReference type="GO" id="GO:0000166">
    <property type="term" value="F:nucleotide binding"/>
    <property type="evidence" value="ECO:0007669"/>
    <property type="project" value="UniProtKB-KW"/>
</dbReference>
<dbReference type="GO" id="GO:0006226">
    <property type="term" value="P:dUMP biosynthetic process"/>
    <property type="evidence" value="ECO:0007669"/>
    <property type="project" value="UniProtKB-UniRule"/>
</dbReference>
<dbReference type="GO" id="GO:0006229">
    <property type="term" value="P:dUTP biosynthetic process"/>
    <property type="evidence" value="ECO:0007669"/>
    <property type="project" value="InterPro"/>
</dbReference>
<dbReference type="GO" id="GO:0015949">
    <property type="term" value="P:nucleobase-containing small molecule interconversion"/>
    <property type="evidence" value="ECO:0007669"/>
    <property type="project" value="TreeGrafter"/>
</dbReference>
<dbReference type="CDD" id="cd07557">
    <property type="entry name" value="trimeric_dUTPase"/>
    <property type="match status" value="1"/>
</dbReference>
<dbReference type="FunFam" id="2.70.40.10:FF:000009">
    <property type="entry name" value="dCTP deaminase, dUMP-forming"/>
    <property type="match status" value="1"/>
</dbReference>
<dbReference type="Gene3D" id="2.70.40.10">
    <property type="match status" value="1"/>
</dbReference>
<dbReference type="HAMAP" id="MF_00146">
    <property type="entry name" value="dCTP_deaminase"/>
    <property type="match status" value="1"/>
</dbReference>
<dbReference type="InterPro" id="IPR011962">
    <property type="entry name" value="dCTP_deaminase"/>
</dbReference>
<dbReference type="InterPro" id="IPR036157">
    <property type="entry name" value="dUTPase-like_sf"/>
</dbReference>
<dbReference type="InterPro" id="IPR033704">
    <property type="entry name" value="dUTPase_trimeric"/>
</dbReference>
<dbReference type="NCBIfam" id="TIGR02274">
    <property type="entry name" value="dCTP_deam"/>
    <property type="match status" value="1"/>
</dbReference>
<dbReference type="PANTHER" id="PTHR42680">
    <property type="entry name" value="DCTP DEAMINASE"/>
    <property type="match status" value="1"/>
</dbReference>
<dbReference type="PANTHER" id="PTHR42680:SF3">
    <property type="entry name" value="DCTP DEAMINASE"/>
    <property type="match status" value="1"/>
</dbReference>
<dbReference type="Pfam" id="PF22769">
    <property type="entry name" value="DCD"/>
    <property type="match status" value="1"/>
</dbReference>
<dbReference type="SUPFAM" id="SSF51283">
    <property type="entry name" value="dUTPase-like"/>
    <property type="match status" value="1"/>
</dbReference>
<accession>Q04WA6</accession>
<proteinExistence type="inferred from homology"/>
<comment type="function">
    <text evidence="1">Bifunctional enzyme that catalyzes both the deamination of dCTP to dUTP and the hydrolysis of dUTP to dUMP without releasing the toxic dUTP intermediate.</text>
</comment>
<comment type="catalytic activity">
    <reaction evidence="1">
        <text>dCTP + 2 H2O = dUMP + NH4(+) + diphosphate</text>
        <dbReference type="Rhea" id="RHEA:19205"/>
        <dbReference type="ChEBI" id="CHEBI:15377"/>
        <dbReference type="ChEBI" id="CHEBI:28938"/>
        <dbReference type="ChEBI" id="CHEBI:33019"/>
        <dbReference type="ChEBI" id="CHEBI:61481"/>
        <dbReference type="ChEBI" id="CHEBI:246422"/>
        <dbReference type="EC" id="3.5.4.30"/>
    </reaction>
</comment>
<comment type="pathway">
    <text evidence="1">Pyrimidine metabolism; dUMP biosynthesis; dUMP from dCTP: step 1/1.</text>
</comment>
<comment type="subunit">
    <text evidence="1">Homotrimer.</text>
</comment>
<comment type="similarity">
    <text evidence="1">Belongs to the dCTP deaminase family.</text>
</comment>